<comment type="similarity">
    <text evidence="1">Belongs to the UPF0178 family.</text>
</comment>
<feature type="chain" id="PRO_0000241814" description="UPF0178 protein HCH_06960">
    <location>
        <begin position="1"/>
        <end position="150"/>
    </location>
</feature>
<evidence type="ECO:0000255" key="1">
    <source>
        <dbReference type="HAMAP-Rule" id="MF_00489"/>
    </source>
</evidence>
<reference key="1">
    <citation type="journal article" date="2005" name="Nucleic Acids Res.">
        <title>Genomic blueprint of Hahella chejuensis, a marine microbe producing an algicidal agent.</title>
        <authorList>
            <person name="Jeong H."/>
            <person name="Yim J.H."/>
            <person name="Lee C."/>
            <person name="Choi S.-H."/>
            <person name="Park Y.K."/>
            <person name="Yoon S.H."/>
            <person name="Hur C.-G."/>
            <person name="Kang H.-Y."/>
            <person name="Kim D."/>
            <person name="Lee H.H."/>
            <person name="Park K.H."/>
            <person name="Park S.-H."/>
            <person name="Park H.-S."/>
            <person name="Lee H.K."/>
            <person name="Oh T.K."/>
            <person name="Kim J.F."/>
        </authorList>
    </citation>
    <scope>NUCLEOTIDE SEQUENCE [LARGE SCALE GENOMIC DNA]</scope>
    <source>
        <strain>KCTC 2396</strain>
    </source>
</reference>
<organism>
    <name type="scientific">Hahella chejuensis (strain KCTC 2396)</name>
    <dbReference type="NCBI Taxonomy" id="349521"/>
    <lineage>
        <taxon>Bacteria</taxon>
        <taxon>Pseudomonadati</taxon>
        <taxon>Pseudomonadota</taxon>
        <taxon>Gammaproteobacteria</taxon>
        <taxon>Oceanospirillales</taxon>
        <taxon>Hahellaceae</taxon>
        <taxon>Hahella</taxon>
    </lineage>
</organism>
<sequence>MRIWVDADACPNVIKEILFRAAERVKTPLILVANQPLKTPPSQYIRSLQVAPGFDVADNHIVQNVEPGELVITADIPLAAEVIDKGAHALNPRGEFYSKENIRQRLMMRDFMETMRSSGEHTGGPAAFNHGDRMEFANQLDRFLAKTSKS</sequence>
<dbReference type="EMBL" id="CP000155">
    <property type="protein sequence ID" value="ABC33576.1"/>
    <property type="molecule type" value="Genomic_DNA"/>
</dbReference>
<dbReference type="RefSeq" id="WP_011400626.1">
    <property type="nucleotide sequence ID" value="NC_007645.1"/>
</dbReference>
<dbReference type="SMR" id="Q2S6Z8"/>
<dbReference type="STRING" id="349521.HCH_06960"/>
<dbReference type="KEGG" id="hch:HCH_06960"/>
<dbReference type="eggNOG" id="COG1671">
    <property type="taxonomic scope" value="Bacteria"/>
</dbReference>
<dbReference type="HOGENOM" id="CLU_106619_2_1_6"/>
<dbReference type="OrthoDB" id="9798918at2"/>
<dbReference type="Proteomes" id="UP000000238">
    <property type="component" value="Chromosome"/>
</dbReference>
<dbReference type="CDD" id="cd18720">
    <property type="entry name" value="PIN_YqxD-like"/>
    <property type="match status" value="1"/>
</dbReference>
<dbReference type="HAMAP" id="MF_00489">
    <property type="entry name" value="UPF0178"/>
    <property type="match status" value="1"/>
</dbReference>
<dbReference type="InterPro" id="IPR003791">
    <property type="entry name" value="UPF0178"/>
</dbReference>
<dbReference type="NCBIfam" id="NF001095">
    <property type="entry name" value="PRK00124.1"/>
    <property type="match status" value="1"/>
</dbReference>
<dbReference type="PANTHER" id="PTHR35146">
    <property type="entry name" value="UPF0178 PROTEIN YAII"/>
    <property type="match status" value="1"/>
</dbReference>
<dbReference type="PANTHER" id="PTHR35146:SF1">
    <property type="entry name" value="UPF0178 PROTEIN YAII"/>
    <property type="match status" value="1"/>
</dbReference>
<dbReference type="Pfam" id="PF02639">
    <property type="entry name" value="DUF188"/>
    <property type="match status" value="1"/>
</dbReference>
<name>Y6960_HAHCH</name>
<accession>Q2S6Z8</accession>
<gene>
    <name type="ordered locus">HCH_06960</name>
</gene>
<protein>
    <recommendedName>
        <fullName evidence="1">UPF0178 protein HCH_06960</fullName>
    </recommendedName>
</protein>
<keyword id="KW-1185">Reference proteome</keyword>
<proteinExistence type="inferred from homology"/>